<proteinExistence type="inferred from homology"/>
<evidence type="ECO:0000255" key="1">
    <source>
        <dbReference type="HAMAP-Rule" id="MF_00075"/>
    </source>
</evidence>
<feature type="chain" id="PRO_0000338785" description="Translation initiation factor IF-1 1">
    <location>
        <begin position="1"/>
        <end position="88"/>
    </location>
</feature>
<feature type="domain" description="S1-like" evidence="1">
    <location>
        <begin position="1"/>
        <end position="72"/>
    </location>
</feature>
<organism>
    <name type="scientific">Burkholderia pseudomallei (strain 668)</name>
    <dbReference type="NCBI Taxonomy" id="320373"/>
    <lineage>
        <taxon>Bacteria</taxon>
        <taxon>Pseudomonadati</taxon>
        <taxon>Pseudomonadota</taxon>
        <taxon>Betaproteobacteria</taxon>
        <taxon>Burkholderiales</taxon>
        <taxon>Burkholderiaceae</taxon>
        <taxon>Burkholderia</taxon>
        <taxon>pseudomallei group</taxon>
    </lineage>
</organism>
<keyword id="KW-0963">Cytoplasm</keyword>
<keyword id="KW-0396">Initiation factor</keyword>
<keyword id="KW-0648">Protein biosynthesis</keyword>
<keyword id="KW-0694">RNA-binding</keyword>
<keyword id="KW-0699">rRNA-binding</keyword>
<protein>
    <recommendedName>
        <fullName evidence="1">Translation initiation factor IF-1 1</fullName>
    </recommendedName>
</protein>
<comment type="function">
    <text evidence="1">One of the essential components for the initiation of protein synthesis. Stabilizes the binding of IF-2 and IF-3 on the 30S subunit to which N-formylmethionyl-tRNA(fMet) subsequently binds. Helps modulate mRNA selection, yielding the 30S pre-initiation complex (PIC). Upon addition of the 50S ribosomal subunit IF-1, IF-2 and IF-3 are released leaving the mature 70S translation initiation complex.</text>
</comment>
<comment type="subunit">
    <text evidence="1">Component of the 30S ribosomal translation pre-initiation complex which assembles on the 30S ribosome in the order IF-2 and IF-3, IF-1 and N-formylmethionyl-tRNA(fMet); mRNA recruitment can occur at any time during PIC assembly.</text>
</comment>
<comment type="subcellular location">
    <subcellularLocation>
        <location evidence="1">Cytoplasm</location>
    </subcellularLocation>
</comment>
<comment type="similarity">
    <text evidence="1">Belongs to the IF-1 family.</text>
</comment>
<reference key="1">
    <citation type="journal article" date="2010" name="Genome Biol. Evol.">
        <title>Continuing evolution of Burkholderia mallei through genome reduction and large-scale rearrangements.</title>
        <authorList>
            <person name="Losada L."/>
            <person name="Ronning C.M."/>
            <person name="DeShazer D."/>
            <person name="Woods D."/>
            <person name="Fedorova N."/>
            <person name="Kim H.S."/>
            <person name="Shabalina S.A."/>
            <person name="Pearson T.R."/>
            <person name="Brinkac L."/>
            <person name="Tan P."/>
            <person name="Nandi T."/>
            <person name="Crabtree J."/>
            <person name="Badger J."/>
            <person name="Beckstrom-Sternberg S."/>
            <person name="Saqib M."/>
            <person name="Schutzer S.E."/>
            <person name="Keim P."/>
            <person name="Nierman W.C."/>
        </authorList>
    </citation>
    <scope>NUCLEOTIDE SEQUENCE [LARGE SCALE GENOMIC DNA]</scope>
    <source>
        <strain>668</strain>
    </source>
</reference>
<name>IF11_BURP6</name>
<gene>
    <name evidence="1" type="primary">infA1</name>
    <name type="ordered locus">BURPS668_1131</name>
</gene>
<dbReference type="EMBL" id="CP000570">
    <property type="protein sequence ID" value="ABN83747.1"/>
    <property type="molecule type" value="Genomic_DNA"/>
</dbReference>
<dbReference type="SMR" id="A3N759"/>
<dbReference type="KEGG" id="bpd:BURPS668_1131"/>
<dbReference type="HOGENOM" id="CLU_151267_4_1_4"/>
<dbReference type="GO" id="GO:0005829">
    <property type="term" value="C:cytosol"/>
    <property type="evidence" value="ECO:0007669"/>
    <property type="project" value="TreeGrafter"/>
</dbReference>
<dbReference type="GO" id="GO:0043022">
    <property type="term" value="F:ribosome binding"/>
    <property type="evidence" value="ECO:0007669"/>
    <property type="project" value="UniProtKB-UniRule"/>
</dbReference>
<dbReference type="GO" id="GO:0019843">
    <property type="term" value="F:rRNA binding"/>
    <property type="evidence" value="ECO:0007669"/>
    <property type="project" value="UniProtKB-UniRule"/>
</dbReference>
<dbReference type="GO" id="GO:0003743">
    <property type="term" value="F:translation initiation factor activity"/>
    <property type="evidence" value="ECO:0007669"/>
    <property type="project" value="UniProtKB-UniRule"/>
</dbReference>
<dbReference type="CDD" id="cd04451">
    <property type="entry name" value="S1_IF1"/>
    <property type="match status" value="1"/>
</dbReference>
<dbReference type="FunFam" id="2.40.50.140:FF:000002">
    <property type="entry name" value="Translation initiation factor IF-1"/>
    <property type="match status" value="1"/>
</dbReference>
<dbReference type="Gene3D" id="2.40.50.140">
    <property type="entry name" value="Nucleic acid-binding proteins"/>
    <property type="match status" value="1"/>
</dbReference>
<dbReference type="HAMAP" id="MF_00075">
    <property type="entry name" value="IF_1"/>
    <property type="match status" value="1"/>
</dbReference>
<dbReference type="InterPro" id="IPR012340">
    <property type="entry name" value="NA-bd_OB-fold"/>
</dbReference>
<dbReference type="InterPro" id="IPR006196">
    <property type="entry name" value="RNA-binding_domain_S1_IF1"/>
</dbReference>
<dbReference type="InterPro" id="IPR003029">
    <property type="entry name" value="S1_domain"/>
</dbReference>
<dbReference type="InterPro" id="IPR004368">
    <property type="entry name" value="TIF_IF1"/>
</dbReference>
<dbReference type="NCBIfam" id="TIGR00008">
    <property type="entry name" value="infA"/>
    <property type="match status" value="1"/>
</dbReference>
<dbReference type="PANTHER" id="PTHR33370">
    <property type="entry name" value="TRANSLATION INITIATION FACTOR IF-1, CHLOROPLASTIC"/>
    <property type="match status" value="1"/>
</dbReference>
<dbReference type="PANTHER" id="PTHR33370:SF1">
    <property type="entry name" value="TRANSLATION INITIATION FACTOR IF-1, CHLOROPLASTIC"/>
    <property type="match status" value="1"/>
</dbReference>
<dbReference type="Pfam" id="PF01176">
    <property type="entry name" value="eIF-1a"/>
    <property type="match status" value="1"/>
</dbReference>
<dbReference type="SMART" id="SM00316">
    <property type="entry name" value="S1"/>
    <property type="match status" value="1"/>
</dbReference>
<dbReference type="SUPFAM" id="SSF50249">
    <property type="entry name" value="Nucleic acid-binding proteins"/>
    <property type="match status" value="1"/>
</dbReference>
<dbReference type="PROSITE" id="PS50832">
    <property type="entry name" value="S1_IF1_TYPE"/>
    <property type="match status" value="1"/>
</dbReference>
<accession>A3N759</accession>
<sequence length="88" mass="10078">MAKEELIELDGIVDEVLPDSRYRVTLDNGVVVGAYASGQMRRHRIRILAGDRVTLELSVYDLTKGRINFRHKDERRSDAAPRASARRR</sequence>